<name>P14_BPPM2</name>
<sequence>MNPTIAKITCPLCGNDEATVHRQKDRKKKLYYRCTGATFADGCGTIQCTGASGQAFISKNMKPLNGVESEDAAIEAAEDAKAEQVKPNKKRSFLDFLVDDE</sequence>
<gene>
    <name type="ORF">XIV</name>
</gene>
<proteinExistence type="predicted"/>
<keyword id="KW-1185">Reference proteome</keyword>
<feature type="chain" id="PRO_0000339909" description="Uncharacterized protein P14">
    <location>
        <begin position="1"/>
        <end position="101"/>
    </location>
</feature>
<organism>
    <name type="scientific">Pseudoalteromonas phage PM2</name>
    <name type="common">Bacteriophage PM2</name>
    <dbReference type="NCBI Taxonomy" id="2905728"/>
    <lineage>
        <taxon>Viruses</taxon>
        <taxon>Varidnaviria</taxon>
        <taxon>Bamfordvirae</taxon>
        <taxon>Preplasmiviricota</taxon>
        <taxon>Tectiliviricetes</taxon>
        <taxon>Vinavirales</taxon>
        <taxon>Corticoviridae</taxon>
        <taxon>Corticovirus</taxon>
        <taxon>Corticovirus PM2</taxon>
    </lineage>
</organism>
<organismHost>
    <name type="scientific">Pseudoalteromonas espejiana</name>
    <dbReference type="NCBI Taxonomy" id="28107"/>
</organismHost>
<dbReference type="EMBL" id="AF155037">
    <property type="protein sequence ID" value="AAD43545.1"/>
    <property type="molecule type" value="Genomic_DNA"/>
</dbReference>
<dbReference type="RefSeq" id="NP_049898.1">
    <property type="nucleotide sequence ID" value="NC_000867.1"/>
</dbReference>
<dbReference type="KEGG" id="vg:1262039"/>
<dbReference type="Proteomes" id="UP000002136">
    <property type="component" value="Genome"/>
</dbReference>
<accession>Q9XJS1</accession>
<comment type="function">
    <text evidence="1">May regulate the expression of phage structural components with protein P13.</text>
</comment>
<reference key="1">
    <citation type="journal article" date="1999" name="Virology">
        <title>The complete genome sequence of PM2, the first lipid-containing bacterial virus to be isolated.</title>
        <authorList>
            <person name="Maennistoe R.H."/>
            <person name="Kivelae H.M."/>
            <person name="Paulin L."/>
            <person name="Bamford D.H."/>
            <person name="Bamford J.K."/>
        </authorList>
    </citation>
    <scope>NUCLEOTIDE SEQUENCE [GENOMIC DNA]</scope>
</reference>
<evidence type="ECO:0000305" key="1"/>
<protein>
    <recommendedName>
        <fullName>Uncharacterized protein P14</fullName>
    </recommendedName>
    <alternativeName>
        <fullName>Protein XIV</fullName>
    </alternativeName>
</protein>